<keyword id="KW-0167">Capsid protein</keyword>
<keyword id="KW-1139">Helical capsid protein</keyword>
<keyword id="KW-1043">Host membrane</keyword>
<keyword id="KW-0472">Membrane</keyword>
<keyword id="KW-1185">Reference proteome</keyword>
<keyword id="KW-0732">Signal</keyword>
<keyword id="KW-0812">Transmembrane</keyword>
<keyword id="KW-1133">Transmembrane helix</keyword>
<keyword id="KW-0946">Virion</keyword>
<organismHost>
    <name type="scientific">Escherichia coli</name>
    <dbReference type="NCBI Taxonomy" id="562"/>
</organismHost>
<comment type="function">
    <text evidence="1">Self assembles to form a helical capsid wrapping up the viral genomic DNA. The capsid displays a filamentous structure with a length of 760-1950 nm and a width of 6-8 nm. The virion assembly and budding take place at the host inner membrane (By similarity).</text>
</comment>
<comment type="subunit">
    <text evidence="1">Homomultimerizes. There are several thousands of this protein in the phage capsid (By similarity).</text>
</comment>
<comment type="subcellular location">
    <subcellularLocation>
        <location evidence="3">Virion</location>
    </subcellularLocation>
    <subcellularLocation>
        <location>Host membrane</location>
        <topology>Single-pass type I membrane protein</topology>
    </subcellularLocation>
    <text evidence="1">prior to assembly, the major capsid protein is found associated with the bacterial host inner membrane.</text>
</comment>
<comment type="similarity">
    <text evidence="3">Belongs to the inovirus capsid protein family.</text>
</comment>
<sequence length="84" mass="8551">MSVITKVAAAKNKIVVGAGLLMASAGAFAADDGTSTATSYATEAMNSLKTQATDLIDQTWPVVTSVAVAGLAIRLFKKFSSKAV</sequence>
<evidence type="ECO:0000250" key="1"/>
<evidence type="ECO:0000255" key="2"/>
<evidence type="ECO:0000305" key="3"/>
<name>CAPSD_BPI22</name>
<protein>
    <recommendedName>
        <fullName>Capsid protein G8P</fullName>
    </recommendedName>
    <alternativeName>
        <fullName>Coat protein B</fullName>
    </alternativeName>
    <alternativeName>
        <fullName>Gene 8 protein</fullName>
        <shortName>G8P</shortName>
    </alternativeName>
    <alternativeName>
        <fullName>Major coat protein</fullName>
    </alternativeName>
</protein>
<organism>
    <name type="scientific">Enterobacteria phage I2-2</name>
    <name type="common">Bacteriophage I2-2</name>
    <dbReference type="NCBI Taxonomy" id="10869"/>
    <lineage>
        <taxon>Viruses</taxon>
        <taxon>Monodnaviria</taxon>
        <taxon>Loebvirae</taxon>
        <taxon>Hofneiviricota</taxon>
        <taxon>Faserviricetes</taxon>
        <taxon>Tubulavirales</taxon>
        <taxon>Inoviridae</taxon>
        <taxon>Lineavirus</taxon>
    </lineage>
</organism>
<reference key="1">
    <citation type="journal article" date="1992" name="J. Mol. Evol.">
        <title>Nucleotide sequence of the genome of the filamentous bacteriophage I2-2: module evolution of the filamentous phage genome.</title>
        <authorList>
            <person name="Stassen A.P."/>
            <person name="Schonmakers E.F."/>
            <person name="Yu M."/>
            <person name="Schoenmakers J.G."/>
            <person name="Konings R.N.H."/>
        </authorList>
    </citation>
    <scope>NUCLEOTIDE SEQUENCE [GENOMIC DNA]</scope>
</reference>
<dbReference type="EMBL" id="X14336">
    <property type="protein sequence ID" value="CAA32517.1"/>
    <property type="molecule type" value="Genomic_DNA"/>
</dbReference>
<dbReference type="PIR" id="S08090">
    <property type="entry name" value="S08090"/>
</dbReference>
<dbReference type="RefSeq" id="NP_039620.1">
    <property type="nucleotide sequence ID" value="NC_001332.1"/>
</dbReference>
<dbReference type="SMR" id="P15416"/>
<dbReference type="GeneID" id="1260722"/>
<dbReference type="KEGG" id="vg:1260722"/>
<dbReference type="OrthoDB" id="38091at10239"/>
<dbReference type="Proteomes" id="UP000000373">
    <property type="component" value="Genome"/>
</dbReference>
<dbReference type="GO" id="GO:0019029">
    <property type="term" value="C:helical viral capsid"/>
    <property type="evidence" value="ECO:0007669"/>
    <property type="project" value="UniProtKB-KW"/>
</dbReference>
<dbReference type="GO" id="GO:0033644">
    <property type="term" value="C:host cell membrane"/>
    <property type="evidence" value="ECO:0007669"/>
    <property type="project" value="UniProtKB-SubCell"/>
</dbReference>
<dbReference type="GO" id="GO:0016020">
    <property type="term" value="C:membrane"/>
    <property type="evidence" value="ECO:0007669"/>
    <property type="project" value="UniProtKB-KW"/>
</dbReference>
<dbReference type="Gene3D" id="1.20.5.80">
    <property type="match status" value="1"/>
</dbReference>
<dbReference type="InterPro" id="IPR008020">
    <property type="entry name" value="G8P"/>
</dbReference>
<dbReference type="InterPro" id="IPR023390">
    <property type="entry name" value="Phage_M13_G8P_capsid_dom_sf"/>
</dbReference>
<dbReference type="Pfam" id="PF19199">
    <property type="entry name" value="Phage_coatGP8"/>
    <property type="match status" value="1"/>
</dbReference>
<dbReference type="PIRSF" id="PIRSF004117">
    <property type="entry name" value="Phage_coat_B"/>
    <property type="match status" value="1"/>
</dbReference>
<dbReference type="SUPFAM" id="SSF57987">
    <property type="entry name" value="Inovirus (filamentous phage) major coat protein"/>
    <property type="match status" value="1"/>
</dbReference>
<gene>
    <name type="primary">VIII</name>
</gene>
<feature type="signal peptide">
    <location>
        <begin position="1"/>
        <end position="29"/>
    </location>
</feature>
<feature type="chain" id="PRO_0000003299" description="Capsid protein G8P">
    <location>
        <begin position="30"/>
        <end position="84"/>
    </location>
</feature>
<feature type="topological domain" description="Periplasmic">
    <location>
        <begin position="30"/>
        <end position="58"/>
    </location>
</feature>
<feature type="transmembrane region" description="Helical" evidence="2">
    <location>
        <begin position="59"/>
        <end position="76"/>
    </location>
</feature>
<feature type="topological domain" description="Cytoplasmic">
    <location>
        <begin position="77"/>
        <end position="84"/>
    </location>
</feature>
<proteinExistence type="inferred from homology"/>
<accession>P15416</accession>